<accession>A8Z2L4</accession>
<gene>
    <name evidence="1" type="primary">pfkA</name>
    <name type="ordered locus">USA300HOU_1685</name>
</gene>
<evidence type="ECO:0000255" key="1">
    <source>
        <dbReference type="HAMAP-Rule" id="MF_00339"/>
    </source>
</evidence>
<feature type="chain" id="PRO_1000079315" description="ATP-dependent 6-phosphofructokinase">
    <location>
        <begin position="1"/>
        <end position="322"/>
    </location>
</feature>
<feature type="active site" description="Proton acceptor" evidence="1">
    <location>
        <position position="129"/>
    </location>
</feature>
<feature type="binding site" evidence="1">
    <location>
        <position position="11"/>
    </location>
    <ligand>
        <name>ATP</name>
        <dbReference type="ChEBI" id="CHEBI:30616"/>
    </ligand>
</feature>
<feature type="binding site" evidence="1">
    <location>
        <begin position="21"/>
        <end position="25"/>
    </location>
    <ligand>
        <name>ADP</name>
        <dbReference type="ChEBI" id="CHEBI:456216"/>
        <note>allosteric activator; ligand shared between dimeric partners</note>
    </ligand>
</feature>
<feature type="binding site" evidence="1">
    <location>
        <begin position="72"/>
        <end position="73"/>
    </location>
    <ligand>
        <name>ATP</name>
        <dbReference type="ChEBI" id="CHEBI:30616"/>
    </ligand>
</feature>
<feature type="binding site" evidence="1">
    <location>
        <begin position="102"/>
        <end position="105"/>
    </location>
    <ligand>
        <name>ATP</name>
        <dbReference type="ChEBI" id="CHEBI:30616"/>
    </ligand>
</feature>
<feature type="binding site" evidence="1">
    <location>
        <position position="103"/>
    </location>
    <ligand>
        <name>Mg(2+)</name>
        <dbReference type="ChEBI" id="CHEBI:18420"/>
        <note>catalytic</note>
    </ligand>
</feature>
<feature type="binding site" description="in other chain" evidence="1">
    <location>
        <begin position="127"/>
        <end position="129"/>
    </location>
    <ligand>
        <name>substrate</name>
        <note>ligand shared between dimeric partners</note>
    </ligand>
</feature>
<feature type="binding site" description="in other chain" evidence="1">
    <location>
        <position position="156"/>
    </location>
    <ligand>
        <name>ADP</name>
        <dbReference type="ChEBI" id="CHEBI:456216"/>
        <note>allosteric activator; ligand shared between dimeric partners</note>
    </ligand>
</feature>
<feature type="binding site" evidence="1">
    <location>
        <position position="164"/>
    </location>
    <ligand>
        <name>substrate</name>
        <note>ligand shared between dimeric partners</note>
    </ligand>
</feature>
<feature type="binding site" description="in other chain" evidence="1">
    <location>
        <begin position="171"/>
        <end position="173"/>
    </location>
    <ligand>
        <name>substrate</name>
        <note>ligand shared between dimeric partners</note>
    </ligand>
</feature>
<feature type="binding site" description="in other chain" evidence="1">
    <location>
        <begin position="187"/>
        <end position="189"/>
    </location>
    <ligand>
        <name>ADP</name>
        <dbReference type="ChEBI" id="CHEBI:456216"/>
        <note>allosteric activator; ligand shared between dimeric partners</note>
    </ligand>
</feature>
<feature type="binding site" description="in other chain" evidence="1">
    <location>
        <position position="213"/>
    </location>
    <ligand>
        <name>ADP</name>
        <dbReference type="ChEBI" id="CHEBI:456216"/>
        <note>allosteric activator; ligand shared between dimeric partners</note>
    </ligand>
</feature>
<feature type="binding site" description="in other chain" evidence="1">
    <location>
        <begin position="215"/>
        <end position="217"/>
    </location>
    <ligand>
        <name>ADP</name>
        <dbReference type="ChEBI" id="CHEBI:456216"/>
        <note>allosteric activator; ligand shared between dimeric partners</note>
    </ligand>
</feature>
<feature type="binding site" description="in other chain" evidence="1">
    <location>
        <position position="224"/>
    </location>
    <ligand>
        <name>substrate</name>
        <note>ligand shared between dimeric partners</note>
    </ligand>
</feature>
<feature type="binding site" evidence="1">
    <location>
        <position position="245"/>
    </location>
    <ligand>
        <name>substrate</name>
        <note>ligand shared between dimeric partners</note>
    </ligand>
</feature>
<feature type="binding site" description="in other chain" evidence="1">
    <location>
        <begin position="251"/>
        <end position="254"/>
    </location>
    <ligand>
        <name>substrate</name>
        <note>ligand shared between dimeric partners</note>
    </ligand>
</feature>
<keyword id="KW-0021">Allosteric enzyme</keyword>
<keyword id="KW-0067">ATP-binding</keyword>
<keyword id="KW-0963">Cytoplasm</keyword>
<keyword id="KW-0324">Glycolysis</keyword>
<keyword id="KW-0418">Kinase</keyword>
<keyword id="KW-0460">Magnesium</keyword>
<keyword id="KW-0479">Metal-binding</keyword>
<keyword id="KW-0547">Nucleotide-binding</keyword>
<keyword id="KW-0808">Transferase</keyword>
<dbReference type="EC" id="2.7.1.11" evidence="1"/>
<dbReference type="EMBL" id="CP000730">
    <property type="protein sequence ID" value="ABX29692.1"/>
    <property type="molecule type" value="Genomic_DNA"/>
</dbReference>
<dbReference type="RefSeq" id="WP_000717561.1">
    <property type="nucleotide sequence ID" value="NC_010079.1"/>
</dbReference>
<dbReference type="SMR" id="A8Z2L4"/>
<dbReference type="KEGG" id="sax:USA300HOU_1685"/>
<dbReference type="HOGENOM" id="CLU_020655_0_1_9"/>
<dbReference type="UniPathway" id="UPA00109">
    <property type="reaction ID" value="UER00182"/>
</dbReference>
<dbReference type="GO" id="GO:0005945">
    <property type="term" value="C:6-phosphofructokinase complex"/>
    <property type="evidence" value="ECO:0007669"/>
    <property type="project" value="TreeGrafter"/>
</dbReference>
<dbReference type="GO" id="GO:0003872">
    <property type="term" value="F:6-phosphofructokinase activity"/>
    <property type="evidence" value="ECO:0007669"/>
    <property type="project" value="UniProtKB-UniRule"/>
</dbReference>
<dbReference type="GO" id="GO:0016208">
    <property type="term" value="F:AMP binding"/>
    <property type="evidence" value="ECO:0007669"/>
    <property type="project" value="TreeGrafter"/>
</dbReference>
<dbReference type="GO" id="GO:0005524">
    <property type="term" value="F:ATP binding"/>
    <property type="evidence" value="ECO:0007669"/>
    <property type="project" value="UniProtKB-KW"/>
</dbReference>
<dbReference type="GO" id="GO:0070095">
    <property type="term" value="F:fructose-6-phosphate binding"/>
    <property type="evidence" value="ECO:0007669"/>
    <property type="project" value="TreeGrafter"/>
</dbReference>
<dbReference type="GO" id="GO:0042802">
    <property type="term" value="F:identical protein binding"/>
    <property type="evidence" value="ECO:0007669"/>
    <property type="project" value="TreeGrafter"/>
</dbReference>
<dbReference type="GO" id="GO:0046872">
    <property type="term" value="F:metal ion binding"/>
    <property type="evidence" value="ECO:0007669"/>
    <property type="project" value="UniProtKB-KW"/>
</dbReference>
<dbReference type="GO" id="GO:0048029">
    <property type="term" value="F:monosaccharide binding"/>
    <property type="evidence" value="ECO:0007669"/>
    <property type="project" value="TreeGrafter"/>
</dbReference>
<dbReference type="GO" id="GO:0061621">
    <property type="term" value="P:canonical glycolysis"/>
    <property type="evidence" value="ECO:0007669"/>
    <property type="project" value="TreeGrafter"/>
</dbReference>
<dbReference type="GO" id="GO:0030388">
    <property type="term" value="P:fructose 1,6-bisphosphate metabolic process"/>
    <property type="evidence" value="ECO:0007669"/>
    <property type="project" value="TreeGrafter"/>
</dbReference>
<dbReference type="GO" id="GO:0006002">
    <property type="term" value="P:fructose 6-phosphate metabolic process"/>
    <property type="evidence" value="ECO:0007669"/>
    <property type="project" value="InterPro"/>
</dbReference>
<dbReference type="FunFam" id="3.40.50.450:FF:000001">
    <property type="entry name" value="ATP-dependent 6-phosphofructokinase"/>
    <property type="match status" value="1"/>
</dbReference>
<dbReference type="FunFam" id="3.40.50.460:FF:000002">
    <property type="entry name" value="ATP-dependent 6-phosphofructokinase"/>
    <property type="match status" value="1"/>
</dbReference>
<dbReference type="Gene3D" id="3.40.50.450">
    <property type="match status" value="1"/>
</dbReference>
<dbReference type="Gene3D" id="3.40.50.460">
    <property type="entry name" value="Phosphofructokinase domain"/>
    <property type="match status" value="1"/>
</dbReference>
<dbReference type="HAMAP" id="MF_00339">
    <property type="entry name" value="Phosphofructokinase_I_B1"/>
    <property type="match status" value="1"/>
</dbReference>
<dbReference type="InterPro" id="IPR022953">
    <property type="entry name" value="ATP_PFK"/>
</dbReference>
<dbReference type="InterPro" id="IPR012003">
    <property type="entry name" value="ATP_PFK_prok-type"/>
</dbReference>
<dbReference type="InterPro" id="IPR012828">
    <property type="entry name" value="PFKA_ATP_prok"/>
</dbReference>
<dbReference type="InterPro" id="IPR015912">
    <property type="entry name" value="Phosphofructokinase_CS"/>
</dbReference>
<dbReference type="InterPro" id="IPR000023">
    <property type="entry name" value="Phosphofructokinase_dom"/>
</dbReference>
<dbReference type="InterPro" id="IPR035966">
    <property type="entry name" value="PKF_sf"/>
</dbReference>
<dbReference type="NCBIfam" id="TIGR02482">
    <property type="entry name" value="PFKA_ATP"/>
    <property type="match status" value="1"/>
</dbReference>
<dbReference type="NCBIfam" id="NF002872">
    <property type="entry name" value="PRK03202.1"/>
    <property type="match status" value="1"/>
</dbReference>
<dbReference type="PANTHER" id="PTHR13697:SF4">
    <property type="entry name" value="ATP-DEPENDENT 6-PHOSPHOFRUCTOKINASE"/>
    <property type="match status" value="1"/>
</dbReference>
<dbReference type="PANTHER" id="PTHR13697">
    <property type="entry name" value="PHOSPHOFRUCTOKINASE"/>
    <property type="match status" value="1"/>
</dbReference>
<dbReference type="Pfam" id="PF00365">
    <property type="entry name" value="PFK"/>
    <property type="match status" value="1"/>
</dbReference>
<dbReference type="PIRSF" id="PIRSF000532">
    <property type="entry name" value="ATP_PFK_prok"/>
    <property type="match status" value="1"/>
</dbReference>
<dbReference type="PRINTS" id="PR00476">
    <property type="entry name" value="PHFRCTKINASE"/>
</dbReference>
<dbReference type="SUPFAM" id="SSF53784">
    <property type="entry name" value="Phosphofructokinase"/>
    <property type="match status" value="1"/>
</dbReference>
<dbReference type="PROSITE" id="PS00433">
    <property type="entry name" value="PHOSPHOFRUCTOKINASE"/>
    <property type="match status" value="1"/>
</dbReference>
<proteinExistence type="inferred from homology"/>
<protein>
    <recommendedName>
        <fullName evidence="1">ATP-dependent 6-phosphofructokinase</fullName>
        <shortName evidence="1">ATP-PFK</shortName>
        <shortName evidence="1">Phosphofructokinase</shortName>
        <ecNumber evidence="1">2.7.1.11</ecNumber>
    </recommendedName>
    <alternativeName>
        <fullName evidence="1">Phosphohexokinase</fullName>
    </alternativeName>
</protein>
<reference key="1">
    <citation type="journal article" date="2007" name="BMC Microbiol.">
        <title>Subtle genetic changes enhance virulence of methicillin resistant and sensitive Staphylococcus aureus.</title>
        <authorList>
            <person name="Highlander S.K."/>
            <person name="Hulten K.G."/>
            <person name="Qin X."/>
            <person name="Jiang H."/>
            <person name="Yerrapragada S."/>
            <person name="Mason E.O. Jr."/>
            <person name="Shang Y."/>
            <person name="Williams T.M."/>
            <person name="Fortunov R.M."/>
            <person name="Liu Y."/>
            <person name="Igboeli O."/>
            <person name="Petrosino J."/>
            <person name="Tirumalai M."/>
            <person name="Uzman A."/>
            <person name="Fox G.E."/>
            <person name="Cardenas A.M."/>
            <person name="Muzny D.M."/>
            <person name="Hemphill L."/>
            <person name="Ding Y."/>
            <person name="Dugan S."/>
            <person name="Blyth P.R."/>
            <person name="Buhay C.J."/>
            <person name="Dinh H.H."/>
            <person name="Hawes A.C."/>
            <person name="Holder M."/>
            <person name="Kovar C.L."/>
            <person name="Lee S.L."/>
            <person name="Liu W."/>
            <person name="Nazareth L.V."/>
            <person name="Wang Q."/>
            <person name="Zhou J."/>
            <person name="Kaplan S.L."/>
            <person name="Weinstock G.M."/>
        </authorList>
    </citation>
    <scope>NUCLEOTIDE SEQUENCE [LARGE SCALE GENOMIC DNA]</scope>
    <source>
        <strain>USA300 / TCH1516</strain>
    </source>
</reference>
<sequence>MKKIAVLTSGGDSPGMNAAVRAVVRTAIYNEIEVYGVYHGYQGLLNDDIHKLELGSVGDTIQRGGTFLYSARCPEFKEQEVRKVAIENLRKRGIEGLVVIGGDGSYRGAQRISEECKEIQTIGIPGTIDNDINGTDFTIGFDTALNTIIGLVDKIRDTASSHARTFIIEAMGRDCGDLALWAGLSVGAETIVVPEVKTDIKEIADKIEQGIKRGKKHSIVLVAEGCMTAQDCQKELSQYINVDNRVSVLGHVQRGGSPTGADRVLASRLGGYAVDLLMQGETAKGVGIKNNKIVATSFDEIFDGKDHKFDYSLYELANKLSI</sequence>
<organism>
    <name type="scientific">Staphylococcus aureus (strain USA300 / TCH1516)</name>
    <dbReference type="NCBI Taxonomy" id="451516"/>
    <lineage>
        <taxon>Bacteria</taxon>
        <taxon>Bacillati</taxon>
        <taxon>Bacillota</taxon>
        <taxon>Bacilli</taxon>
        <taxon>Bacillales</taxon>
        <taxon>Staphylococcaceae</taxon>
        <taxon>Staphylococcus</taxon>
    </lineage>
</organism>
<name>PFKA_STAAT</name>
<comment type="function">
    <text evidence="1">Catalyzes the phosphorylation of D-fructose 6-phosphate to fructose 1,6-bisphosphate by ATP, the first committing step of glycolysis.</text>
</comment>
<comment type="catalytic activity">
    <reaction evidence="1">
        <text>beta-D-fructose 6-phosphate + ATP = beta-D-fructose 1,6-bisphosphate + ADP + H(+)</text>
        <dbReference type="Rhea" id="RHEA:16109"/>
        <dbReference type="ChEBI" id="CHEBI:15378"/>
        <dbReference type="ChEBI" id="CHEBI:30616"/>
        <dbReference type="ChEBI" id="CHEBI:32966"/>
        <dbReference type="ChEBI" id="CHEBI:57634"/>
        <dbReference type="ChEBI" id="CHEBI:456216"/>
        <dbReference type="EC" id="2.7.1.11"/>
    </reaction>
</comment>
<comment type="cofactor">
    <cofactor evidence="1">
        <name>Mg(2+)</name>
        <dbReference type="ChEBI" id="CHEBI:18420"/>
    </cofactor>
</comment>
<comment type="activity regulation">
    <text evidence="1">Allosterically activated by ADP and other diphosphonucleosides, and allosterically inhibited by phosphoenolpyruvate.</text>
</comment>
<comment type="pathway">
    <text evidence="1">Carbohydrate degradation; glycolysis; D-glyceraldehyde 3-phosphate and glycerone phosphate from D-glucose: step 3/4.</text>
</comment>
<comment type="subunit">
    <text evidence="1">Homotetramer.</text>
</comment>
<comment type="subcellular location">
    <subcellularLocation>
        <location evidence="1">Cytoplasm</location>
    </subcellularLocation>
</comment>
<comment type="similarity">
    <text evidence="1">Belongs to the phosphofructokinase type A (PFKA) family. ATP-dependent PFK group I subfamily. Prokaryotic clade 'B1' sub-subfamily.</text>
</comment>